<evidence type="ECO:0000255" key="1">
    <source>
        <dbReference type="HAMAP-Rule" id="MF_01576"/>
    </source>
</evidence>
<evidence type="ECO:0000305" key="2"/>
<accession>Q8FRU9</accession>
<reference key="1">
    <citation type="journal article" date="2003" name="Genome Res.">
        <title>Comparative complete genome sequence analysis of the amino acid replacements responsible for the thermostability of Corynebacterium efficiens.</title>
        <authorList>
            <person name="Nishio Y."/>
            <person name="Nakamura Y."/>
            <person name="Kawarabayasi Y."/>
            <person name="Usuda Y."/>
            <person name="Kimura E."/>
            <person name="Sugimoto S."/>
            <person name="Matsui K."/>
            <person name="Yamagishi A."/>
            <person name="Kikuchi H."/>
            <person name="Ikeo K."/>
            <person name="Gojobori T."/>
        </authorList>
    </citation>
    <scope>NUCLEOTIDE SEQUENCE [LARGE SCALE GENOMIC DNA]</scope>
    <source>
        <strain>DSM 44549 / YS-314 / AJ 12310 / JCM 11189 / NBRC 100395</strain>
    </source>
</reference>
<proteinExistence type="inferred from homology"/>
<organism>
    <name type="scientific">Corynebacterium efficiens (strain DSM 44549 / YS-314 / AJ 12310 / JCM 11189 / NBRC 100395)</name>
    <dbReference type="NCBI Taxonomy" id="196164"/>
    <lineage>
        <taxon>Bacteria</taxon>
        <taxon>Bacillati</taxon>
        <taxon>Actinomycetota</taxon>
        <taxon>Actinomycetes</taxon>
        <taxon>Mycobacteriales</taxon>
        <taxon>Corynebacteriaceae</taxon>
        <taxon>Corynebacterium</taxon>
    </lineage>
</organism>
<protein>
    <recommendedName>
        <fullName evidence="1">Bifunctional protein FolD</fullName>
    </recommendedName>
    <domain>
        <recommendedName>
            <fullName evidence="1">Methylenetetrahydrofolate dehydrogenase</fullName>
            <ecNumber evidence="1">1.5.1.5</ecNumber>
        </recommendedName>
    </domain>
    <domain>
        <recommendedName>
            <fullName evidence="1">Methenyltetrahydrofolate cyclohydrolase</fullName>
            <ecNumber evidence="1">3.5.4.9</ecNumber>
        </recommendedName>
    </domain>
</protein>
<gene>
    <name evidence="1" type="primary">folD</name>
    <name type="ordered locus">CE0659</name>
</gene>
<feature type="chain" id="PRO_0000268324" description="Bifunctional protein FolD">
    <location>
        <begin position="1"/>
        <end position="284"/>
    </location>
</feature>
<feature type="binding site" evidence="1">
    <location>
        <begin position="165"/>
        <end position="167"/>
    </location>
    <ligand>
        <name>NADP(+)</name>
        <dbReference type="ChEBI" id="CHEBI:58349"/>
    </ligand>
</feature>
<feature type="binding site" evidence="1">
    <location>
        <position position="192"/>
    </location>
    <ligand>
        <name>NADP(+)</name>
        <dbReference type="ChEBI" id="CHEBI:58349"/>
    </ligand>
</feature>
<feature type="binding site" evidence="1">
    <location>
        <position position="233"/>
    </location>
    <ligand>
        <name>NADP(+)</name>
        <dbReference type="ChEBI" id="CHEBI:58349"/>
    </ligand>
</feature>
<dbReference type="EC" id="1.5.1.5" evidence="1"/>
<dbReference type="EC" id="3.5.4.9" evidence="1"/>
<dbReference type="EMBL" id="BA000035">
    <property type="protein sequence ID" value="BAC17469.1"/>
    <property type="status" value="ALT_INIT"/>
    <property type="molecule type" value="Genomic_DNA"/>
</dbReference>
<dbReference type="RefSeq" id="WP_035109791.1">
    <property type="nucleotide sequence ID" value="NC_004369.1"/>
</dbReference>
<dbReference type="SMR" id="Q8FRU9"/>
<dbReference type="STRING" id="196164.gene:10741061"/>
<dbReference type="KEGG" id="cef:CE0659"/>
<dbReference type="eggNOG" id="COG0190">
    <property type="taxonomic scope" value="Bacteria"/>
</dbReference>
<dbReference type="HOGENOM" id="CLU_034045_3_0_11"/>
<dbReference type="OrthoDB" id="9803580at2"/>
<dbReference type="UniPathway" id="UPA00193"/>
<dbReference type="Proteomes" id="UP000001409">
    <property type="component" value="Chromosome"/>
</dbReference>
<dbReference type="GO" id="GO:0005829">
    <property type="term" value="C:cytosol"/>
    <property type="evidence" value="ECO:0007669"/>
    <property type="project" value="TreeGrafter"/>
</dbReference>
<dbReference type="GO" id="GO:0004477">
    <property type="term" value="F:methenyltetrahydrofolate cyclohydrolase activity"/>
    <property type="evidence" value="ECO:0007669"/>
    <property type="project" value="UniProtKB-UniRule"/>
</dbReference>
<dbReference type="GO" id="GO:0004488">
    <property type="term" value="F:methylenetetrahydrofolate dehydrogenase (NADP+) activity"/>
    <property type="evidence" value="ECO:0007669"/>
    <property type="project" value="UniProtKB-UniRule"/>
</dbReference>
<dbReference type="GO" id="GO:0000105">
    <property type="term" value="P:L-histidine biosynthetic process"/>
    <property type="evidence" value="ECO:0007669"/>
    <property type="project" value="UniProtKB-KW"/>
</dbReference>
<dbReference type="GO" id="GO:0009086">
    <property type="term" value="P:methionine biosynthetic process"/>
    <property type="evidence" value="ECO:0007669"/>
    <property type="project" value="UniProtKB-KW"/>
</dbReference>
<dbReference type="GO" id="GO:0006164">
    <property type="term" value="P:purine nucleotide biosynthetic process"/>
    <property type="evidence" value="ECO:0007669"/>
    <property type="project" value="UniProtKB-KW"/>
</dbReference>
<dbReference type="GO" id="GO:0035999">
    <property type="term" value="P:tetrahydrofolate interconversion"/>
    <property type="evidence" value="ECO:0007669"/>
    <property type="project" value="UniProtKB-UniRule"/>
</dbReference>
<dbReference type="CDD" id="cd01080">
    <property type="entry name" value="NAD_bind_m-THF_DH_Cyclohyd"/>
    <property type="match status" value="1"/>
</dbReference>
<dbReference type="FunFam" id="3.40.50.10860:FF:000001">
    <property type="entry name" value="Bifunctional protein FolD"/>
    <property type="match status" value="1"/>
</dbReference>
<dbReference type="FunFam" id="3.40.50.720:FF:000094">
    <property type="entry name" value="Bifunctional protein FolD"/>
    <property type="match status" value="1"/>
</dbReference>
<dbReference type="Gene3D" id="3.40.50.10860">
    <property type="entry name" value="Leucine Dehydrogenase, chain A, domain 1"/>
    <property type="match status" value="1"/>
</dbReference>
<dbReference type="Gene3D" id="3.40.50.720">
    <property type="entry name" value="NAD(P)-binding Rossmann-like Domain"/>
    <property type="match status" value="1"/>
</dbReference>
<dbReference type="HAMAP" id="MF_01576">
    <property type="entry name" value="THF_DHG_CYH"/>
    <property type="match status" value="1"/>
</dbReference>
<dbReference type="InterPro" id="IPR046346">
    <property type="entry name" value="Aminoacid_DH-like_N_sf"/>
</dbReference>
<dbReference type="InterPro" id="IPR036291">
    <property type="entry name" value="NAD(P)-bd_dom_sf"/>
</dbReference>
<dbReference type="InterPro" id="IPR000672">
    <property type="entry name" value="THF_DH/CycHdrlase"/>
</dbReference>
<dbReference type="InterPro" id="IPR020630">
    <property type="entry name" value="THF_DH/CycHdrlase_cat_dom"/>
</dbReference>
<dbReference type="InterPro" id="IPR020631">
    <property type="entry name" value="THF_DH/CycHdrlase_NAD-bd_dom"/>
</dbReference>
<dbReference type="NCBIfam" id="NF010789">
    <property type="entry name" value="PRK14193.1"/>
    <property type="match status" value="1"/>
</dbReference>
<dbReference type="PANTHER" id="PTHR48099:SF5">
    <property type="entry name" value="C-1-TETRAHYDROFOLATE SYNTHASE, CYTOPLASMIC"/>
    <property type="match status" value="1"/>
</dbReference>
<dbReference type="PANTHER" id="PTHR48099">
    <property type="entry name" value="C-1-TETRAHYDROFOLATE SYNTHASE, CYTOPLASMIC-RELATED"/>
    <property type="match status" value="1"/>
</dbReference>
<dbReference type="Pfam" id="PF00763">
    <property type="entry name" value="THF_DHG_CYH"/>
    <property type="match status" value="1"/>
</dbReference>
<dbReference type="Pfam" id="PF02882">
    <property type="entry name" value="THF_DHG_CYH_C"/>
    <property type="match status" value="1"/>
</dbReference>
<dbReference type="PRINTS" id="PR00085">
    <property type="entry name" value="THFDHDRGNASE"/>
</dbReference>
<dbReference type="SUPFAM" id="SSF53223">
    <property type="entry name" value="Aminoacid dehydrogenase-like, N-terminal domain"/>
    <property type="match status" value="1"/>
</dbReference>
<dbReference type="SUPFAM" id="SSF51735">
    <property type="entry name" value="NAD(P)-binding Rossmann-fold domains"/>
    <property type="match status" value="1"/>
</dbReference>
<name>FOLD_COREF</name>
<sequence length="284" mass="30134">MTAIKLDGNLYRDEIFADLAQRVAALKEKGIVPGLATVLVGDDPASHSYVKMKHRDCEQIGVNSIRRDLPADISQEELFAVIDELNADDSCTGYIVQLPLPKHLDENAVLERIDPAKDADGLHPVNLGKLVLNEPAPLPCTPNGSISLLRRFGIELNGAKVVVIGRGVTVGRPIGLMLTRRSENSTVTLCHTGTKDLAAETRAADVIVAAAGQPHMLTADMVKPGAAVLDVGVSRKDGKLLGDVHPDVWEVAGAVSPNPGGVGPLTRAFLVHNVVERAEKLAGL</sequence>
<keyword id="KW-0028">Amino-acid biosynthesis</keyword>
<keyword id="KW-0368">Histidine biosynthesis</keyword>
<keyword id="KW-0378">Hydrolase</keyword>
<keyword id="KW-0486">Methionine biosynthesis</keyword>
<keyword id="KW-0511">Multifunctional enzyme</keyword>
<keyword id="KW-0521">NADP</keyword>
<keyword id="KW-0554">One-carbon metabolism</keyword>
<keyword id="KW-0560">Oxidoreductase</keyword>
<keyword id="KW-0658">Purine biosynthesis</keyword>
<keyword id="KW-1185">Reference proteome</keyword>
<comment type="function">
    <text evidence="1">Catalyzes the oxidation of 5,10-methylenetetrahydrofolate to 5,10-methenyltetrahydrofolate and then the hydrolysis of 5,10-methenyltetrahydrofolate to 10-formyltetrahydrofolate.</text>
</comment>
<comment type="catalytic activity">
    <reaction evidence="1">
        <text>(6R)-5,10-methylene-5,6,7,8-tetrahydrofolate + NADP(+) = (6R)-5,10-methenyltetrahydrofolate + NADPH</text>
        <dbReference type="Rhea" id="RHEA:22812"/>
        <dbReference type="ChEBI" id="CHEBI:15636"/>
        <dbReference type="ChEBI" id="CHEBI:57455"/>
        <dbReference type="ChEBI" id="CHEBI:57783"/>
        <dbReference type="ChEBI" id="CHEBI:58349"/>
        <dbReference type="EC" id="1.5.1.5"/>
    </reaction>
</comment>
<comment type="catalytic activity">
    <reaction evidence="1">
        <text>(6R)-5,10-methenyltetrahydrofolate + H2O = (6R)-10-formyltetrahydrofolate + H(+)</text>
        <dbReference type="Rhea" id="RHEA:23700"/>
        <dbReference type="ChEBI" id="CHEBI:15377"/>
        <dbReference type="ChEBI" id="CHEBI:15378"/>
        <dbReference type="ChEBI" id="CHEBI:57455"/>
        <dbReference type="ChEBI" id="CHEBI:195366"/>
        <dbReference type="EC" id="3.5.4.9"/>
    </reaction>
</comment>
<comment type="pathway">
    <text evidence="1">One-carbon metabolism; tetrahydrofolate interconversion.</text>
</comment>
<comment type="subunit">
    <text evidence="1">Homodimer.</text>
</comment>
<comment type="similarity">
    <text evidence="1">Belongs to the tetrahydrofolate dehydrogenase/cyclohydrolase family.</text>
</comment>
<comment type="sequence caution" evidence="2">
    <conflict type="erroneous initiation">
        <sequence resource="EMBL-CDS" id="BAC17469"/>
    </conflict>
</comment>